<keyword id="KW-1003">Cell membrane</keyword>
<keyword id="KW-0472">Membrane</keyword>
<keyword id="KW-1185">Reference proteome</keyword>
<keyword id="KW-0812">Transmembrane</keyword>
<keyword id="KW-1133">Transmembrane helix</keyword>
<keyword id="KW-0813">Transport</keyword>
<reference key="1">
    <citation type="journal article" date="1997" name="Nature">
        <title>The complete genome sequence of the gastric pathogen Helicobacter pylori.</title>
        <authorList>
            <person name="Tomb J.-F."/>
            <person name="White O."/>
            <person name="Kerlavage A.R."/>
            <person name="Clayton R.A."/>
            <person name="Sutton G.G."/>
            <person name="Fleischmann R.D."/>
            <person name="Ketchum K.A."/>
            <person name="Klenk H.-P."/>
            <person name="Gill S.R."/>
            <person name="Dougherty B.A."/>
            <person name="Nelson K.E."/>
            <person name="Quackenbush J."/>
            <person name="Zhou L."/>
            <person name="Kirkness E.F."/>
            <person name="Peterson S.N."/>
            <person name="Loftus B.J."/>
            <person name="Richardson D.L."/>
            <person name="Dodson R.J."/>
            <person name="Khalak H.G."/>
            <person name="Glodek A."/>
            <person name="McKenney K."/>
            <person name="FitzGerald L.M."/>
            <person name="Lee N."/>
            <person name="Adams M.D."/>
            <person name="Hickey E.K."/>
            <person name="Berg D.E."/>
            <person name="Gocayne J.D."/>
            <person name="Utterback T.R."/>
            <person name="Peterson J.D."/>
            <person name="Kelley J.M."/>
            <person name="Cotton M.D."/>
            <person name="Weidman J.F."/>
            <person name="Fujii C."/>
            <person name="Bowman C."/>
            <person name="Watthey L."/>
            <person name="Wallin E."/>
            <person name="Hayes W.S."/>
            <person name="Borodovsky M."/>
            <person name="Karp P.D."/>
            <person name="Smith H.O."/>
            <person name="Fraser C.M."/>
            <person name="Venter J.C."/>
        </authorList>
    </citation>
    <scope>NUCLEOTIDE SEQUENCE [LARGE SCALE GENOMIC DNA]</scope>
    <source>
        <strain>ATCC 700392 / 26695</strain>
    </source>
</reference>
<sequence>MHEFLKAFKDAFPHTISILLGYLLMGMTFGMLLVQQGYDYKVALFMSLFIYAGAVQFVAITLLSAQASLMNVVIVSLLVNARQTCYALSMLDRFKNTKWRLPYLAHALTDETFALLNLYAPKEGVSEKDFIFSISLLNHSYWIFGSLVGSLVGSHFSFDTQGMEFVMTAIFIVLFMEQYKRTTNHKNAWLGIVIAVVCLALFGTEYFLLIALVLMVLALMLFRKQLEC</sequence>
<proteinExistence type="inferred from homology"/>
<evidence type="ECO:0000255" key="1"/>
<evidence type="ECO:0000305" key="2"/>
<organism>
    <name type="scientific">Helicobacter pylori (strain ATCC 700392 / 26695)</name>
    <name type="common">Campylobacter pylori</name>
    <dbReference type="NCBI Taxonomy" id="85962"/>
    <lineage>
        <taxon>Bacteria</taxon>
        <taxon>Pseudomonadati</taxon>
        <taxon>Campylobacterota</taxon>
        <taxon>Epsilonproteobacteria</taxon>
        <taxon>Campylobacterales</taxon>
        <taxon>Helicobacteraceae</taxon>
        <taxon>Helicobacter</taxon>
    </lineage>
</organism>
<name>Y1331_HELPY</name>
<accession>O25889</accession>
<gene>
    <name type="ordered locus">HP_1331</name>
</gene>
<feature type="chain" id="PRO_0000111783" description="Uncharacterized membrane protein HP_1331">
    <location>
        <begin position="1"/>
        <end position="228"/>
    </location>
</feature>
<feature type="transmembrane region" description="Helical" evidence="1">
    <location>
        <begin position="14"/>
        <end position="34"/>
    </location>
</feature>
<feature type="transmembrane region" description="Helical" evidence="1">
    <location>
        <begin position="42"/>
        <end position="62"/>
    </location>
</feature>
<feature type="transmembrane region" description="Helical" evidence="1">
    <location>
        <begin position="130"/>
        <end position="150"/>
    </location>
</feature>
<feature type="transmembrane region" description="Helical" evidence="1">
    <location>
        <begin position="156"/>
        <end position="176"/>
    </location>
</feature>
<feature type="transmembrane region" description="Helical" evidence="1">
    <location>
        <begin position="192"/>
        <end position="212"/>
    </location>
</feature>
<dbReference type="EMBL" id="AE000511">
    <property type="protein sequence ID" value="AAD08372.1"/>
    <property type="molecule type" value="Genomic_DNA"/>
</dbReference>
<dbReference type="PIR" id="C64686">
    <property type="entry name" value="C64686"/>
</dbReference>
<dbReference type="RefSeq" id="NP_208123.1">
    <property type="nucleotide sequence ID" value="NC_000915.1"/>
</dbReference>
<dbReference type="FunCoup" id="O25889">
    <property type="interactions" value="68"/>
</dbReference>
<dbReference type="STRING" id="85962.HP_1331"/>
<dbReference type="PaxDb" id="85962-C694_06870"/>
<dbReference type="EnsemblBacteria" id="AAD08372">
    <property type="protein sequence ID" value="AAD08372"/>
    <property type="gene ID" value="HP_1331"/>
</dbReference>
<dbReference type="KEGG" id="heo:C694_06870"/>
<dbReference type="KEGG" id="hpy:HP_1331"/>
<dbReference type="PATRIC" id="fig|85962.47.peg.1425"/>
<dbReference type="eggNOG" id="COG1296">
    <property type="taxonomic scope" value="Bacteria"/>
</dbReference>
<dbReference type="InParanoid" id="O25889"/>
<dbReference type="OrthoDB" id="9803444at2"/>
<dbReference type="PhylomeDB" id="O25889"/>
<dbReference type="Proteomes" id="UP000000429">
    <property type="component" value="Chromosome"/>
</dbReference>
<dbReference type="GO" id="GO:0005886">
    <property type="term" value="C:plasma membrane"/>
    <property type="evidence" value="ECO:0007669"/>
    <property type="project" value="UniProtKB-SubCell"/>
</dbReference>
<dbReference type="GO" id="GO:1903785">
    <property type="term" value="P:L-valine transmembrane transport"/>
    <property type="evidence" value="ECO:0000318"/>
    <property type="project" value="GO_Central"/>
</dbReference>
<dbReference type="InterPro" id="IPR004471">
    <property type="entry name" value="Brnchd-chn_aa_trnsp_AzlC"/>
</dbReference>
<dbReference type="InterPro" id="IPR011606">
    <property type="entry name" value="Brnchd-chn_aa_trnsp_permease"/>
</dbReference>
<dbReference type="NCBIfam" id="TIGR00346">
    <property type="entry name" value="azlC"/>
    <property type="match status" value="1"/>
</dbReference>
<dbReference type="PANTHER" id="PTHR34979">
    <property type="entry name" value="INNER MEMBRANE PROTEIN YGAZ"/>
    <property type="match status" value="1"/>
</dbReference>
<dbReference type="PANTHER" id="PTHR34979:SF1">
    <property type="entry name" value="INNER MEMBRANE PROTEIN YGAZ"/>
    <property type="match status" value="1"/>
</dbReference>
<dbReference type="Pfam" id="PF03591">
    <property type="entry name" value="AzlC"/>
    <property type="match status" value="1"/>
</dbReference>
<comment type="subcellular location">
    <subcellularLocation>
        <location evidence="2">Cell membrane</location>
        <topology evidence="2">Multi-pass membrane protein</topology>
    </subcellularLocation>
</comment>
<comment type="similarity">
    <text evidence="2">Belongs to the AzlC family.</text>
</comment>
<protein>
    <recommendedName>
        <fullName>Uncharacterized membrane protein HP_1331</fullName>
    </recommendedName>
</protein>